<feature type="chain" id="PRO_1000060854" description="Small ribosomal subunit protein uS10">
    <location>
        <begin position="1"/>
        <end position="104"/>
    </location>
</feature>
<sequence length="104" mass="11856">MEKIRLKLKAYDHRVLDRSVASIVEAVKRTGADLRGPIPLPTKIRRYTVIKGPHVNKDSREQFEIRVHSRIIDIIVATPETVDSLMKLDLAPEVDVEVRSMGQE</sequence>
<organism>
    <name type="scientific">Aliarcobacter butzleri (strain RM4018)</name>
    <name type="common">Arcobacter butzleri</name>
    <dbReference type="NCBI Taxonomy" id="367737"/>
    <lineage>
        <taxon>Bacteria</taxon>
        <taxon>Pseudomonadati</taxon>
        <taxon>Campylobacterota</taxon>
        <taxon>Epsilonproteobacteria</taxon>
        <taxon>Campylobacterales</taxon>
        <taxon>Arcobacteraceae</taxon>
        <taxon>Aliarcobacter</taxon>
    </lineage>
</organism>
<reference key="1">
    <citation type="journal article" date="2007" name="PLoS ONE">
        <title>The complete genome sequence and analysis of the Epsilonproteobacterium Arcobacter butzleri.</title>
        <authorList>
            <person name="Miller W.G."/>
            <person name="Parker C.T."/>
            <person name="Rubenfield M."/>
            <person name="Mendz G.L."/>
            <person name="Woesten M.M.S.M."/>
            <person name="Ussery D.W."/>
            <person name="Stolz J.F."/>
            <person name="Binnewies T.T."/>
            <person name="Hallin P.F."/>
            <person name="Wang G."/>
            <person name="Malek J.A."/>
            <person name="Rogosin A."/>
            <person name="Stanker L.H."/>
            <person name="Mandrell R.E."/>
        </authorList>
    </citation>
    <scope>NUCLEOTIDE SEQUENCE [LARGE SCALE GENOMIC DNA]</scope>
    <source>
        <strain>RM4018</strain>
    </source>
</reference>
<gene>
    <name evidence="1" type="primary">rpsJ</name>
    <name type="ordered locus">Abu_0751</name>
</gene>
<keyword id="KW-1185">Reference proteome</keyword>
<keyword id="KW-0687">Ribonucleoprotein</keyword>
<keyword id="KW-0689">Ribosomal protein</keyword>
<name>RS10_ALIB4</name>
<evidence type="ECO:0000255" key="1">
    <source>
        <dbReference type="HAMAP-Rule" id="MF_00508"/>
    </source>
</evidence>
<evidence type="ECO:0000305" key="2"/>
<comment type="function">
    <text evidence="1">Involved in the binding of tRNA to the ribosomes.</text>
</comment>
<comment type="subunit">
    <text evidence="1">Part of the 30S ribosomal subunit.</text>
</comment>
<comment type="similarity">
    <text evidence="1">Belongs to the universal ribosomal protein uS10 family.</text>
</comment>
<proteinExistence type="inferred from homology"/>
<protein>
    <recommendedName>
        <fullName evidence="1">Small ribosomal subunit protein uS10</fullName>
    </recommendedName>
    <alternativeName>
        <fullName evidence="2">30S ribosomal protein S10</fullName>
    </alternativeName>
</protein>
<dbReference type="EMBL" id="CP000361">
    <property type="protein sequence ID" value="ABV67016.1"/>
    <property type="molecule type" value="Genomic_DNA"/>
</dbReference>
<dbReference type="RefSeq" id="WP_004510819.1">
    <property type="nucleotide sequence ID" value="NC_009850.1"/>
</dbReference>
<dbReference type="SMR" id="A8ESU2"/>
<dbReference type="STRING" id="367737.Abu_0751"/>
<dbReference type="GeneID" id="24304036"/>
<dbReference type="KEGG" id="abu:Abu_0751"/>
<dbReference type="eggNOG" id="COG0051">
    <property type="taxonomic scope" value="Bacteria"/>
</dbReference>
<dbReference type="HOGENOM" id="CLU_122625_1_2_7"/>
<dbReference type="Proteomes" id="UP000001136">
    <property type="component" value="Chromosome"/>
</dbReference>
<dbReference type="GO" id="GO:1990904">
    <property type="term" value="C:ribonucleoprotein complex"/>
    <property type="evidence" value="ECO:0007669"/>
    <property type="project" value="UniProtKB-KW"/>
</dbReference>
<dbReference type="GO" id="GO:0005840">
    <property type="term" value="C:ribosome"/>
    <property type="evidence" value="ECO:0007669"/>
    <property type="project" value="UniProtKB-KW"/>
</dbReference>
<dbReference type="GO" id="GO:0003735">
    <property type="term" value="F:structural constituent of ribosome"/>
    <property type="evidence" value="ECO:0007669"/>
    <property type="project" value="InterPro"/>
</dbReference>
<dbReference type="GO" id="GO:0000049">
    <property type="term" value="F:tRNA binding"/>
    <property type="evidence" value="ECO:0007669"/>
    <property type="project" value="UniProtKB-UniRule"/>
</dbReference>
<dbReference type="GO" id="GO:0006412">
    <property type="term" value="P:translation"/>
    <property type="evidence" value="ECO:0007669"/>
    <property type="project" value="UniProtKB-UniRule"/>
</dbReference>
<dbReference type="FunFam" id="3.30.70.600:FF:000003">
    <property type="entry name" value="30S ribosomal protein S10"/>
    <property type="match status" value="1"/>
</dbReference>
<dbReference type="Gene3D" id="3.30.70.600">
    <property type="entry name" value="Ribosomal protein S10 domain"/>
    <property type="match status" value="1"/>
</dbReference>
<dbReference type="HAMAP" id="MF_00508">
    <property type="entry name" value="Ribosomal_uS10"/>
    <property type="match status" value="1"/>
</dbReference>
<dbReference type="InterPro" id="IPR001848">
    <property type="entry name" value="Ribosomal_uS10"/>
</dbReference>
<dbReference type="InterPro" id="IPR018268">
    <property type="entry name" value="Ribosomal_uS10_CS"/>
</dbReference>
<dbReference type="InterPro" id="IPR027486">
    <property type="entry name" value="Ribosomal_uS10_dom"/>
</dbReference>
<dbReference type="InterPro" id="IPR036838">
    <property type="entry name" value="Ribosomal_uS10_dom_sf"/>
</dbReference>
<dbReference type="NCBIfam" id="NF001861">
    <property type="entry name" value="PRK00596.1"/>
    <property type="match status" value="1"/>
</dbReference>
<dbReference type="NCBIfam" id="TIGR01049">
    <property type="entry name" value="rpsJ_bact"/>
    <property type="match status" value="1"/>
</dbReference>
<dbReference type="PANTHER" id="PTHR11700">
    <property type="entry name" value="30S RIBOSOMAL PROTEIN S10 FAMILY MEMBER"/>
    <property type="match status" value="1"/>
</dbReference>
<dbReference type="Pfam" id="PF00338">
    <property type="entry name" value="Ribosomal_S10"/>
    <property type="match status" value="1"/>
</dbReference>
<dbReference type="PRINTS" id="PR00971">
    <property type="entry name" value="RIBOSOMALS10"/>
</dbReference>
<dbReference type="SMART" id="SM01403">
    <property type="entry name" value="Ribosomal_S10"/>
    <property type="match status" value="1"/>
</dbReference>
<dbReference type="SUPFAM" id="SSF54999">
    <property type="entry name" value="Ribosomal protein S10"/>
    <property type="match status" value="1"/>
</dbReference>
<dbReference type="PROSITE" id="PS00361">
    <property type="entry name" value="RIBOSOMAL_S10"/>
    <property type="match status" value="1"/>
</dbReference>
<accession>A8ESU2</accession>